<sequence length="489" mass="52201">MESMFSSPAEAALQREAGMPGLLTPLPDLDRVYELERVAGFVRDLGCERVALQFPDQLLGDAVAVAARLEETTGSKMFILGDTAYGSCCVDVLGAEQAGAQAVIHFGPACLSPPARPLPVTFVLCRRSVALELCVKAFEAQNPDPKAPVVLLSEPACAHALEALATLLRPRYLDLLVSSPAFPLPVGSLSPEPKPLERFGRRFPLAPGRRLEEYGAFYVGGSKASPDPDLDPDLSRLLLGWAPGQPFSSCCPDTGKTQDEGARAGRLRARRRYLVERARDARVVGLLVGTLGVAQHREALAHLRNLTQAAGKRSYVLALGRPTPAKLANFPEVDVFVLLACPLGALAPQLSGSFFQPILAPCELEAACNPAWPPPGLAPHLTHYADLLPGSPFHVPLPPSESELWETPDVSLITGDLRPPPAWKSSNDHGSLALTPRPQLELAESSPAASFLSSRSWQGLEPRLGQTPVTEAVSGRRGIAIAYEDEGSG</sequence>
<feature type="chain" id="PRO_0000307891" description="2-(3-amino-3-carboxypropyl)histidine synthase subunit 2">
    <location>
        <begin position="1"/>
        <end position="489"/>
    </location>
</feature>
<feature type="binding site" evidence="1">
    <location>
        <position position="89"/>
    </location>
    <ligand>
        <name>[4Fe-4S] cluster</name>
        <dbReference type="ChEBI" id="CHEBI:49883"/>
    </ligand>
</feature>
<feature type="binding site" evidence="1">
    <location>
        <position position="110"/>
    </location>
    <ligand>
        <name>[4Fe-4S] cluster</name>
        <dbReference type="ChEBI" id="CHEBI:49883"/>
    </ligand>
</feature>
<feature type="binding site" evidence="1">
    <location>
        <position position="341"/>
    </location>
    <ligand>
        <name>[4Fe-4S] cluster</name>
        <dbReference type="ChEBI" id="CHEBI:49883"/>
    </ligand>
</feature>
<feature type="modified residue" description="N-acetylmethionine" evidence="2">
    <location>
        <position position="1"/>
    </location>
</feature>
<feature type="modified residue" description="Phosphoserine" evidence="2">
    <location>
        <position position="7"/>
    </location>
</feature>
<feature type="modified residue" description="Phosphothreonine" evidence="2">
    <location>
        <position position="435"/>
    </location>
</feature>
<feature type="modified residue" description="Phosphoserine" evidence="2">
    <location>
        <position position="446"/>
    </location>
</feature>
<feature type="modified residue" description="Phosphoserine" evidence="2">
    <location>
        <position position="456"/>
    </location>
</feature>
<feature type="modified residue" description="Phosphothreonine" evidence="2">
    <location>
        <position position="467"/>
    </location>
</feature>
<feature type="modified residue" description="Phosphoserine" evidence="2">
    <location>
        <position position="488"/>
    </location>
</feature>
<keyword id="KW-0007">Acetylation</keyword>
<keyword id="KW-0408">Iron</keyword>
<keyword id="KW-0411">Iron-sulfur</keyword>
<keyword id="KW-0479">Metal-binding</keyword>
<keyword id="KW-0597">Phosphoprotein</keyword>
<keyword id="KW-1185">Reference proteome</keyword>
<protein>
    <recommendedName>
        <fullName evidence="4">2-(3-amino-3-carboxypropyl)histidine synthase subunit 2</fullName>
    </recommendedName>
    <alternativeName>
        <fullName>Diphthamide biosynthesis protein 2</fullName>
    </alternativeName>
    <alternativeName>
        <fullName evidence="4">Diphtheria toxin resistance protein 2</fullName>
    </alternativeName>
    <alternativeName>
        <fullName evidence="4">S-adenosyl-L-methionine:L-histidine 3-amino-3-carboxypropyltransferase 2</fullName>
    </alternativeName>
</protein>
<evidence type="ECO:0000250" key="1">
    <source>
        <dbReference type="UniProtKB" id="P32461"/>
    </source>
</evidence>
<evidence type="ECO:0000250" key="2">
    <source>
        <dbReference type="UniProtKB" id="Q9BQC3"/>
    </source>
</evidence>
<evidence type="ECO:0000250" key="3">
    <source>
        <dbReference type="UniProtKB" id="Q9CR25"/>
    </source>
</evidence>
<evidence type="ECO:0000305" key="4"/>
<proteinExistence type="evidence at transcript level"/>
<reference key="1">
    <citation type="submission" date="2004-11" db="EMBL/GenBank/DDBJ databases">
        <authorList>
            <consortium name="The German cDNA consortium"/>
        </authorList>
    </citation>
    <scope>NUCLEOTIDE SEQUENCE [LARGE SCALE MRNA]</scope>
    <source>
        <tissue>Kidney</tissue>
    </source>
</reference>
<accession>Q5RE82</accession>
<organism>
    <name type="scientific">Pongo abelii</name>
    <name type="common">Sumatran orangutan</name>
    <name type="synonym">Pongo pygmaeus abelii</name>
    <dbReference type="NCBI Taxonomy" id="9601"/>
    <lineage>
        <taxon>Eukaryota</taxon>
        <taxon>Metazoa</taxon>
        <taxon>Chordata</taxon>
        <taxon>Craniata</taxon>
        <taxon>Vertebrata</taxon>
        <taxon>Euteleostomi</taxon>
        <taxon>Mammalia</taxon>
        <taxon>Eutheria</taxon>
        <taxon>Euarchontoglires</taxon>
        <taxon>Primates</taxon>
        <taxon>Haplorrhini</taxon>
        <taxon>Catarrhini</taxon>
        <taxon>Hominidae</taxon>
        <taxon>Pongo</taxon>
    </lineage>
</organism>
<comment type="function">
    <text evidence="1">Required for the first step of diphthamide biosynthesis, a post-translational modification of histidine which occurs in elongation factor 2 (By similarity). DPH1 and DPH2 transfer a 3-amino-3-carboxypropyl (ACP) group from S-adenosyl-L-methionine (SAM) to a histidine residue, the reaction is assisted by a reduction system comprising DPH3 and a NADH-dependent reductase (By similarity). Facilitates the reduction of the catalytic iron-sulfur cluster found in the DPH1 subunit (By similarity).</text>
</comment>
<comment type="cofactor">
    <cofactor evidence="1">
        <name>[4Fe-4S] cluster</name>
        <dbReference type="ChEBI" id="CHEBI:49883"/>
    </cofactor>
    <text evidence="1">Binds 1 [4Fe-4S] cluster per subunit. The cluster facilitates the reduction of the catalytic iron-sulfur cluster in the DPH1 subunit.</text>
</comment>
<comment type="pathway">
    <text evidence="4">Protein modification; peptidyl-diphthamide biosynthesis.</text>
</comment>
<comment type="subunit">
    <text evidence="1 3">Component of the 2-(3-amino-3-carboxypropyl)histidine synthase complex composed of DPH1, DPH2, DPH3 and a NADH-dependent reductase (By similarity). Interacts with DPH1 (By similarity).</text>
</comment>
<comment type="similarity">
    <text evidence="4">Belongs to the DPH1/DPH2 family. DPH2 subfamily.</text>
</comment>
<name>DPH2_PONAB</name>
<dbReference type="EMBL" id="CR857652">
    <property type="protein sequence ID" value="CAH89925.1"/>
    <property type="molecule type" value="mRNA"/>
</dbReference>
<dbReference type="RefSeq" id="NP_001124904.1">
    <property type="nucleotide sequence ID" value="NM_001131432.1"/>
</dbReference>
<dbReference type="SMR" id="Q5RE82"/>
<dbReference type="FunCoup" id="Q5RE82">
    <property type="interactions" value="1557"/>
</dbReference>
<dbReference type="STRING" id="9601.ENSPPYP00000001667"/>
<dbReference type="Ensembl" id="ENSPPYT00000001723.2">
    <property type="protein sequence ID" value="ENSPPYP00000001667.2"/>
    <property type="gene ID" value="ENSPPYG00000001439.2"/>
</dbReference>
<dbReference type="GeneID" id="100171771"/>
<dbReference type="KEGG" id="pon:100171771"/>
<dbReference type="CTD" id="1802"/>
<dbReference type="eggNOG" id="KOG2648">
    <property type="taxonomic scope" value="Eukaryota"/>
</dbReference>
<dbReference type="GeneTree" id="ENSGT00940000153694"/>
<dbReference type="InParanoid" id="Q5RE82"/>
<dbReference type="OMA" id="QIWNENH"/>
<dbReference type="OrthoDB" id="449241at2759"/>
<dbReference type="UniPathway" id="UPA00559"/>
<dbReference type="Proteomes" id="UP000001595">
    <property type="component" value="Chromosome 1"/>
</dbReference>
<dbReference type="GO" id="GO:0120513">
    <property type="term" value="C:2-(3-amino-3-carboxypropyl)histidine synthase complex"/>
    <property type="evidence" value="ECO:0000250"/>
    <property type="project" value="UniProtKB"/>
</dbReference>
<dbReference type="GO" id="GO:0090560">
    <property type="term" value="F:2-(3-amino-3-carboxypropyl)histidine synthase activity"/>
    <property type="evidence" value="ECO:0007669"/>
    <property type="project" value="UniProtKB-EC"/>
</dbReference>
<dbReference type="GO" id="GO:0051539">
    <property type="term" value="F:4 iron, 4 sulfur cluster binding"/>
    <property type="evidence" value="ECO:0000250"/>
    <property type="project" value="UniProtKB"/>
</dbReference>
<dbReference type="GO" id="GO:0046872">
    <property type="term" value="F:metal ion binding"/>
    <property type="evidence" value="ECO:0007669"/>
    <property type="project" value="UniProtKB-KW"/>
</dbReference>
<dbReference type="GO" id="GO:0017183">
    <property type="term" value="P:protein histidyl modification to diphthamide"/>
    <property type="evidence" value="ECO:0000250"/>
    <property type="project" value="UniProtKB"/>
</dbReference>
<dbReference type="FunFam" id="3.40.50.11840:FF:000002">
    <property type="entry name" value="2-(3-amino-3-carboxypropyl)histidine synthase subunit 2"/>
    <property type="match status" value="1"/>
</dbReference>
<dbReference type="FunFam" id="3.40.50.11860:FF:000001">
    <property type="entry name" value="2-(3-amino-3-carboxypropyl)histidine synthase subunit 2"/>
    <property type="match status" value="1"/>
</dbReference>
<dbReference type="Gene3D" id="3.40.50.11840">
    <property type="entry name" value="Diphthamide synthesis DPH1/DPH2 domain 1"/>
    <property type="match status" value="1"/>
</dbReference>
<dbReference type="Gene3D" id="3.40.50.11860">
    <property type="entry name" value="Diphthamide synthesis DPH1/DPH2 domain 3"/>
    <property type="match status" value="1"/>
</dbReference>
<dbReference type="InterPro" id="IPR010014">
    <property type="entry name" value="DHP2"/>
</dbReference>
<dbReference type="InterPro" id="IPR016435">
    <property type="entry name" value="DPH1/DPH2"/>
</dbReference>
<dbReference type="InterPro" id="IPR042263">
    <property type="entry name" value="DPH1/DPH2_1"/>
</dbReference>
<dbReference type="InterPro" id="IPR042265">
    <property type="entry name" value="DPH1/DPH2_3"/>
</dbReference>
<dbReference type="NCBIfam" id="TIGR00322">
    <property type="entry name" value="diphth2_R"/>
    <property type="match status" value="1"/>
</dbReference>
<dbReference type="NCBIfam" id="TIGR00272">
    <property type="entry name" value="DPH2"/>
    <property type="match status" value="1"/>
</dbReference>
<dbReference type="PANTHER" id="PTHR10762:SF2">
    <property type="entry name" value="2-(3-AMINO-3-CARBOXYPROPYL)HISTIDINE SYNTHASE SUBUNIT 2"/>
    <property type="match status" value="1"/>
</dbReference>
<dbReference type="PANTHER" id="PTHR10762">
    <property type="entry name" value="DIPHTHAMIDE BIOSYNTHESIS PROTEIN"/>
    <property type="match status" value="1"/>
</dbReference>
<dbReference type="Pfam" id="PF01866">
    <property type="entry name" value="Diphthamide_syn"/>
    <property type="match status" value="1"/>
</dbReference>
<dbReference type="SFLD" id="SFLDG01121">
    <property type="entry name" value="Diphthamide_biosynthesis"/>
    <property type="match status" value="1"/>
</dbReference>
<dbReference type="SFLD" id="SFLDF00408">
    <property type="entry name" value="Diphthamide_biosynthesis_famil"/>
    <property type="match status" value="1"/>
</dbReference>
<dbReference type="SFLD" id="SFLDS00032">
    <property type="entry name" value="Radical_SAM_3-amino-3-carboxyp"/>
    <property type="match status" value="1"/>
</dbReference>
<gene>
    <name type="primary">DPH2</name>
</gene>